<protein>
    <recommendedName>
        <fullName evidence="1">Large ribosomal subunit protein uL10</fullName>
    </recommendedName>
    <alternativeName>
        <fullName evidence="3">50S ribosomal protein L10</fullName>
    </alternativeName>
    <alternativeName>
        <fullName evidence="1">Acidic ribosomal protein P0 homolog</fullName>
    </alternativeName>
    <alternativeName>
        <fullName>L10e</fullName>
    </alternativeName>
</protein>
<evidence type="ECO:0000255" key="1">
    <source>
        <dbReference type="HAMAP-Rule" id="MF_00280"/>
    </source>
</evidence>
<evidence type="ECO:0000256" key="2">
    <source>
        <dbReference type="SAM" id="MobiDB-lite"/>
    </source>
</evidence>
<evidence type="ECO:0000305" key="3"/>
<proteinExistence type="inferred from homology"/>
<comment type="function">
    <text evidence="1">Forms part of the ribosomal stalk, playing a central role in the interaction of the ribosome with GTP-bound translation factors.</text>
</comment>
<comment type="subunit">
    <text evidence="1">Part of the 50S ribosomal subunit. Forms part of the ribosomal stalk which helps the ribosome interact with GTP-bound translation factors. Forms a heptameric L10(L12)2(L12)2(L12)2 complex, where L10 forms an elongated spine to which the L12 dimers bind in a sequential fashion.</text>
</comment>
<comment type="miscellaneous">
    <text>Was called L10e in this organism; in this case 'e' is for E.coli-like, not eukaryotic-type protein.</text>
</comment>
<comment type="similarity">
    <text evidence="1">Belongs to the universal ribosomal protein uL10 family.</text>
</comment>
<gene>
    <name evidence="1" type="primary">rpl10</name>
    <name type="synonym">rpl10p</name>
    <name evidence="1" type="synonym">rplP0</name>
    <name type="ordered locus">VNG_1104G</name>
</gene>
<name>RL10_HALSA</name>
<keyword id="KW-1185">Reference proteome</keyword>
<keyword id="KW-0687">Ribonucleoprotein</keyword>
<keyword id="KW-0689">Ribosomal protein</keyword>
<keyword id="KW-0694">RNA-binding</keyword>
<keyword id="KW-0699">rRNA-binding</keyword>
<dbReference type="EMBL" id="X13008">
    <property type="protein sequence ID" value="CAA31431.1"/>
    <property type="molecule type" value="Genomic_DNA"/>
</dbReference>
<dbReference type="EMBL" id="X15078">
    <property type="protein sequence ID" value="CAA33180.1"/>
    <property type="molecule type" value="Genomic_DNA"/>
</dbReference>
<dbReference type="EMBL" id="AE004437">
    <property type="protein sequence ID" value="AAG19499.1"/>
    <property type="molecule type" value="Genomic_DNA"/>
</dbReference>
<dbReference type="PIR" id="G84266">
    <property type="entry name" value="G84266"/>
</dbReference>
<dbReference type="PIR" id="S01315">
    <property type="entry name" value="R5HSL0"/>
</dbReference>
<dbReference type="RefSeq" id="WP_010902794.1">
    <property type="nucleotide sequence ID" value="NC_002607.1"/>
</dbReference>
<dbReference type="SMR" id="P13553"/>
<dbReference type="FunCoup" id="P13553">
    <property type="interactions" value="146"/>
</dbReference>
<dbReference type="STRING" id="64091.VNG_1104G"/>
<dbReference type="PaxDb" id="64091-VNG_1104G"/>
<dbReference type="KEGG" id="hal:VNG_1104G"/>
<dbReference type="PATRIC" id="fig|64091.14.peg.845"/>
<dbReference type="HOGENOM" id="CLU_053173_0_0_2"/>
<dbReference type="InParanoid" id="P13553"/>
<dbReference type="OrthoDB" id="30930at2157"/>
<dbReference type="PhylomeDB" id="P13553"/>
<dbReference type="Proteomes" id="UP000000554">
    <property type="component" value="Chromosome"/>
</dbReference>
<dbReference type="GO" id="GO:0022625">
    <property type="term" value="C:cytosolic large ribosomal subunit"/>
    <property type="evidence" value="ECO:0000318"/>
    <property type="project" value="GO_Central"/>
</dbReference>
<dbReference type="GO" id="GO:0070180">
    <property type="term" value="F:large ribosomal subunit rRNA binding"/>
    <property type="evidence" value="ECO:0000318"/>
    <property type="project" value="GO_Central"/>
</dbReference>
<dbReference type="GO" id="GO:0003735">
    <property type="term" value="F:structural constituent of ribosome"/>
    <property type="evidence" value="ECO:0000318"/>
    <property type="project" value="GO_Central"/>
</dbReference>
<dbReference type="GO" id="GO:0002181">
    <property type="term" value="P:cytoplasmic translation"/>
    <property type="evidence" value="ECO:0000318"/>
    <property type="project" value="GO_Central"/>
</dbReference>
<dbReference type="CDD" id="cd05795">
    <property type="entry name" value="Ribosomal_P0_L10e"/>
    <property type="match status" value="1"/>
</dbReference>
<dbReference type="Gene3D" id="3.30.70.1730">
    <property type="match status" value="1"/>
</dbReference>
<dbReference type="Gene3D" id="3.90.105.20">
    <property type="match status" value="1"/>
</dbReference>
<dbReference type="Gene3D" id="6.10.140.760">
    <property type="match status" value="1"/>
</dbReference>
<dbReference type="HAMAP" id="MF_00280">
    <property type="entry name" value="Ribosomal_uL10_arch"/>
    <property type="match status" value="1"/>
</dbReference>
<dbReference type="InterPro" id="IPR050323">
    <property type="entry name" value="Ribosomal_protein_uL10"/>
</dbReference>
<dbReference type="InterPro" id="IPR001790">
    <property type="entry name" value="Ribosomal_uL10"/>
</dbReference>
<dbReference type="InterPro" id="IPR040637">
    <property type="entry name" value="Ribosomal_uL10-like_insert"/>
</dbReference>
<dbReference type="InterPro" id="IPR043164">
    <property type="entry name" value="Ribosomal_uL10-like_insert_sf"/>
</dbReference>
<dbReference type="InterPro" id="IPR043141">
    <property type="entry name" value="Ribosomal_uL10-like_sf"/>
</dbReference>
<dbReference type="InterPro" id="IPR022909">
    <property type="entry name" value="Ribosomal_uL10_arc"/>
</dbReference>
<dbReference type="NCBIfam" id="NF003097">
    <property type="entry name" value="PRK04019.1-4"/>
    <property type="match status" value="1"/>
</dbReference>
<dbReference type="NCBIfam" id="NF003098">
    <property type="entry name" value="PRK04019.1-5"/>
    <property type="match status" value="1"/>
</dbReference>
<dbReference type="PANTHER" id="PTHR45699">
    <property type="entry name" value="60S ACIDIC RIBOSOMAL PROTEIN P0"/>
    <property type="match status" value="1"/>
</dbReference>
<dbReference type="PANTHER" id="PTHR45699:SF3">
    <property type="entry name" value="LARGE RIBOSOMAL SUBUNIT PROTEIN UL10"/>
    <property type="match status" value="1"/>
</dbReference>
<dbReference type="Pfam" id="PF00466">
    <property type="entry name" value="Ribosomal_L10"/>
    <property type="match status" value="1"/>
</dbReference>
<dbReference type="Pfam" id="PF17777">
    <property type="entry name" value="RL10P_insert"/>
    <property type="match status" value="1"/>
</dbReference>
<dbReference type="SUPFAM" id="SSF160369">
    <property type="entry name" value="Ribosomal protein L10-like"/>
    <property type="match status" value="1"/>
</dbReference>
<sequence>MSAEEQRTTEEVPEWKRQEVAELVDLLETYDSVGVVNVTGIPSKQLQDMRRGLHGQAALRMSRNTLLVRALEEAGDGLDTLTEYVEGEVGLVATNDNPFGLYQQLENSKTPAPINAGEVAPNDIVVPEGDTGIDPGPFVGELQTIGANARIQEGSIQVLDDSVVTEEGETVSDDVSNVLSELGIEPKEVGLDLRGVFSEGVLFTPEELEIDVDEYRADIQSAAASARNLSVNAAYPTERTAPDLIAKGRGEAKSLGLQASVESPDLADDLVSKADAQVRALAAQIDDEDALPEELQDVDAPAAPAGGEADTTADEQSDETQASEADDADDSDDDDDDDDGNAGAEGLGEMFG</sequence>
<feature type="chain" id="PRO_0000154790" description="Large ribosomal subunit protein uL10">
    <location>
        <begin position="1"/>
        <end position="352"/>
    </location>
</feature>
<feature type="region of interest" description="Disordered" evidence="2">
    <location>
        <begin position="286"/>
        <end position="352"/>
    </location>
</feature>
<feature type="compositionally biased region" description="Acidic residues" evidence="2">
    <location>
        <begin position="286"/>
        <end position="297"/>
    </location>
</feature>
<feature type="compositionally biased region" description="Low complexity" evidence="2">
    <location>
        <begin position="299"/>
        <end position="310"/>
    </location>
</feature>
<feature type="compositionally biased region" description="Acidic residues" evidence="2">
    <location>
        <begin position="324"/>
        <end position="340"/>
    </location>
</feature>
<feature type="compositionally biased region" description="Gly residues" evidence="2">
    <location>
        <begin position="343"/>
        <end position="352"/>
    </location>
</feature>
<feature type="sequence conflict" description="In Ref. 2; CAA33180." evidence="3" ref="2">
    <original>L</original>
    <variation>V</variation>
    <location>
        <position position="59"/>
    </location>
</feature>
<accession>P13553</accession>
<accession>P17006</accession>
<accession>Q9HQL4</accession>
<organism>
    <name type="scientific">Halobacterium salinarum (strain ATCC 700922 / JCM 11081 / NRC-1)</name>
    <name type="common">Halobacterium halobium</name>
    <dbReference type="NCBI Taxonomy" id="64091"/>
    <lineage>
        <taxon>Archaea</taxon>
        <taxon>Methanobacteriati</taxon>
        <taxon>Methanobacteriota</taxon>
        <taxon>Stenosarchaea group</taxon>
        <taxon>Halobacteria</taxon>
        <taxon>Halobacteriales</taxon>
        <taxon>Halobacteriaceae</taxon>
        <taxon>Halobacterium</taxon>
        <taxon>Halobacterium salinarum NRC-34001</taxon>
    </lineage>
</organism>
<reference key="1">
    <citation type="journal article" date="1988" name="Eur. J. Biochem.">
        <title>Complete nucleotide sequence of the ribosomal 'A' protein operon from the archaebacterium, Halobacterium halobium.</title>
        <authorList>
            <person name="Itoh T."/>
        </authorList>
    </citation>
    <scope>NUCLEOTIDE SEQUENCE [GENOMIC DNA]</scope>
    <source>
        <strain>R1 / S9</strain>
    </source>
</reference>
<reference key="2">
    <citation type="journal article" date="1989" name="EMBO J.">
        <title>Characterization of the L11, L1, L10 and L12 equivalent ribosomal protein gene cluster of the halophilic archaebacterium Halobacterium cutirubrum.</title>
        <authorList>
            <person name="Shimmin L.C."/>
            <person name="Dennis P.P."/>
        </authorList>
    </citation>
    <scope>NUCLEOTIDE SEQUENCE [GENOMIC DNA]</scope>
    <source>
        <strain>ATCC 33170 / DSM 669 / NCCB 81095 / NRC 34001</strain>
    </source>
</reference>
<reference key="3">
    <citation type="journal article" date="2000" name="Proc. Natl. Acad. Sci. U.S.A.">
        <title>Genome sequence of Halobacterium species NRC-1.</title>
        <authorList>
            <person name="Ng W.V."/>
            <person name="Kennedy S.P."/>
            <person name="Mahairas G.G."/>
            <person name="Berquist B."/>
            <person name="Pan M."/>
            <person name="Shukla H.D."/>
            <person name="Lasky S.R."/>
            <person name="Baliga N.S."/>
            <person name="Thorsson V."/>
            <person name="Sbrogna J."/>
            <person name="Swartzell S."/>
            <person name="Weir D."/>
            <person name="Hall J."/>
            <person name="Dahl T.A."/>
            <person name="Welti R."/>
            <person name="Goo Y.A."/>
            <person name="Leithauser B."/>
            <person name="Keller K."/>
            <person name="Cruz R."/>
            <person name="Danson M.J."/>
            <person name="Hough D.W."/>
            <person name="Maddocks D.G."/>
            <person name="Jablonski P.E."/>
            <person name="Krebs M.P."/>
            <person name="Angevine C.M."/>
            <person name="Dale H."/>
            <person name="Isenbarger T.A."/>
            <person name="Peck R.F."/>
            <person name="Pohlschroder M."/>
            <person name="Spudich J.L."/>
            <person name="Jung K.-H."/>
            <person name="Alam M."/>
            <person name="Freitas T."/>
            <person name="Hou S."/>
            <person name="Daniels C.J."/>
            <person name="Dennis P.P."/>
            <person name="Omer A.D."/>
            <person name="Ebhardt H."/>
            <person name="Lowe T.M."/>
            <person name="Liang P."/>
            <person name="Riley M."/>
            <person name="Hood L."/>
            <person name="DasSarma S."/>
        </authorList>
    </citation>
    <scope>NUCLEOTIDE SEQUENCE [LARGE SCALE GENOMIC DNA]</scope>
    <source>
        <strain>ATCC 700922 / JCM 11081 / NRC-1</strain>
    </source>
</reference>